<comment type="function">
    <text evidence="3">Mitochondrial membrane protein that catalyzes the essential first step of biosynthesis of glycerolipids such as triglycerides, phosphatidic acids and lysophosphatidic acids (By similarity). Esterifies acyl-group from acyl-coenzyme A (acyl-CoA) to the sn-1 position of glycerol-3-phosphate, to produce lysophosphatidic acid (By similarity). Has a narrow hydrophobic binding cleft that selects for a linear acyl chain (By similarity). Catalytic activity is higher for substrates with a 16-carbon acyl chain (By similarity).</text>
</comment>
<comment type="catalytic activity">
    <reaction evidence="3">
        <text>sn-glycerol 3-phosphate + an acyl-CoA = a 1-acyl-sn-glycero-3-phosphate + CoA</text>
        <dbReference type="Rhea" id="RHEA:15325"/>
        <dbReference type="ChEBI" id="CHEBI:57287"/>
        <dbReference type="ChEBI" id="CHEBI:57597"/>
        <dbReference type="ChEBI" id="CHEBI:57970"/>
        <dbReference type="ChEBI" id="CHEBI:58342"/>
        <dbReference type="EC" id="2.3.1.15"/>
    </reaction>
    <physiologicalReaction direction="left-to-right" evidence="3">
        <dbReference type="Rhea" id="RHEA:15326"/>
    </physiologicalReaction>
</comment>
<comment type="catalytic activity">
    <reaction evidence="3">
        <text>(9Z,12Z)-octadecadienoyl-CoA + sn-glycerol 3-phosphate = 1-(9Z,12Z)-octadecadienoyl-sn-glycero-3-phosphate + CoA</text>
        <dbReference type="Rhea" id="RHEA:37203"/>
        <dbReference type="ChEBI" id="CHEBI:57287"/>
        <dbReference type="ChEBI" id="CHEBI:57383"/>
        <dbReference type="ChEBI" id="CHEBI:57597"/>
        <dbReference type="ChEBI" id="CHEBI:74547"/>
    </reaction>
    <physiologicalReaction direction="left-to-right" evidence="3">
        <dbReference type="Rhea" id="RHEA:37204"/>
    </physiologicalReaction>
</comment>
<comment type="catalytic activity">
    <reaction evidence="3">
        <text>sn-glycerol 3-phosphate + (9Z)-octadecenoyl-CoA = 1-(9Z-octadecenoyl)-sn-glycero-3-phosphate + CoA</text>
        <dbReference type="Rhea" id="RHEA:37199"/>
        <dbReference type="ChEBI" id="CHEBI:57287"/>
        <dbReference type="ChEBI" id="CHEBI:57387"/>
        <dbReference type="ChEBI" id="CHEBI:57597"/>
        <dbReference type="ChEBI" id="CHEBI:74544"/>
    </reaction>
    <physiologicalReaction direction="left-to-right" evidence="3">
        <dbReference type="Rhea" id="RHEA:37200"/>
    </physiologicalReaction>
</comment>
<comment type="catalytic activity">
    <reaction evidence="3">
        <text>sn-glycerol 3-phosphate + octadecanoyl-CoA = 1-octadecanoyl-sn-glycero-3-phosphate + CoA</text>
        <dbReference type="Rhea" id="RHEA:37195"/>
        <dbReference type="ChEBI" id="CHEBI:57287"/>
        <dbReference type="ChEBI" id="CHEBI:57394"/>
        <dbReference type="ChEBI" id="CHEBI:57597"/>
        <dbReference type="ChEBI" id="CHEBI:74565"/>
    </reaction>
    <physiologicalReaction direction="left-to-right" evidence="3">
        <dbReference type="Rhea" id="RHEA:37196"/>
    </physiologicalReaction>
</comment>
<comment type="catalytic activity">
    <reaction evidence="3">
        <text>sn-glycerol 3-phosphate + hexadecanoyl-CoA = 1-hexadecanoyl-sn-glycero-3-phosphate + CoA</text>
        <dbReference type="Rhea" id="RHEA:35723"/>
        <dbReference type="ChEBI" id="CHEBI:57287"/>
        <dbReference type="ChEBI" id="CHEBI:57379"/>
        <dbReference type="ChEBI" id="CHEBI:57518"/>
        <dbReference type="ChEBI" id="CHEBI:57597"/>
    </reaction>
    <physiologicalReaction direction="left-to-right" evidence="3">
        <dbReference type="Rhea" id="RHEA:35724"/>
    </physiologicalReaction>
</comment>
<comment type="catalytic activity">
    <reaction evidence="3">
        <text>dodecanoyl-CoA + sn-glycerol 3-phosphate = 1-dodecanoyl-sn-glycerol 3-phosphate + CoA</text>
        <dbReference type="Rhea" id="RHEA:35727"/>
        <dbReference type="ChEBI" id="CHEBI:57287"/>
        <dbReference type="ChEBI" id="CHEBI:57375"/>
        <dbReference type="ChEBI" id="CHEBI:57597"/>
        <dbReference type="ChEBI" id="CHEBI:72682"/>
    </reaction>
    <physiologicalReaction direction="left-to-right" evidence="3">
        <dbReference type="Rhea" id="RHEA:35728"/>
    </physiologicalReaction>
</comment>
<comment type="catalytic activity">
    <reaction evidence="3">
        <text>1-acyl-sn-glycero-3-phospho-(1'-sn-glycerol) + an acyl-CoA = a 1,2-diacyl-sn-glycero-3-phospho-(1'-sn-glycerol) + CoA</text>
        <dbReference type="Rhea" id="RHEA:33203"/>
        <dbReference type="ChEBI" id="CHEBI:57287"/>
        <dbReference type="ChEBI" id="CHEBI:58342"/>
        <dbReference type="ChEBI" id="CHEBI:64716"/>
        <dbReference type="ChEBI" id="CHEBI:64840"/>
    </reaction>
    <physiologicalReaction direction="left-to-right" evidence="3">
        <dbReference type="Rhea" id="RHEA:33204"/>
    </physiologicalReaction>
</comment>
<comment type="pathway">
    <text evidence="3">Phospholipid metabolism; CDP-diacylglycerol biosynthesis; CDP-diacylglycerol from sn-glycerol 3-phosphate: step 1/3.</text>
</comment>
<comment type="subcellular location">
    <subcellularLocation>
        <location evidence="3">Mitochondrion outer membrane</location>
        <topology evidence="3">Peripheral membrane protein</topology>
    </subcellularLocation>
    <text evidence="3">Associated with the mitochondrion outer membrane of hepatic cells via a patch of basic residues.</text>
</comment>
<comment type="tissue specificity">
    <text evidence="5">Highly expressed in adipose tissues and lung. Low expression in liver.</text>
</comment>
<comment type="domain">
    <text evidence="3">The HXXXXD motif is essential for acyltransferase activity and contributes to the binding of the cysteamine moiety of the acyl-CoA and the phosphate moiety of the glycerol-3-phosphate.</text>
</comment>
<comment type="similarity">
    <text evidence="6">Belongs to the GPAT/DAPAT family.</text>
</comment>
<feature type="chain" id="PRO_0000245029" description="Glycerol-3-phosphate acyltransferase 1, mitochondrial">
    <location>
        <begin position="1"/>
        <end position="825"/>
    </location>
</feature>
<feature type="topological domain" description="Cytoplasmic" evidence="3">
    <location>
        <begin position="1"/>
        <end position="87"/>
    </location>
</feature>
<feature type="intramembrane region" evidence="3">
    <location>
        <begin position="88"/>
        <end position="118"/>
    </location>
</feature>
<feature type="topological domain" description="Cytoplasmic" evidence="3">
    <location>
        <begin position="119"/>
        <end position="825"/>
    </location>
</feature>
<feature type="region of interest" description="Important for mitochondrial localization" evidence="3">
    <location>
        <begin position="80"/>
        <end position="120"/>
    </location>
</feature>
<feature type="region of interest" description="Disordered" evidence="4">
    <location>
        <begin position="435"/>
        <end position="455"/>
    </location>
</feature>
<feature type="short sequence motif" description="HXXXXD motif" evidence="3">
    <location>
        <begin position="230"/>
        <end position="235"/>
    </location>
</feature>
<feature type="binding site" evidence="3">
    <location>
        <position position="278"/>
    </location>
    <ligand>
        <name>CoA</name>
        <dbReference type="ChEBI" id="CHEBI:57287"/>
    </ligand>
</feature>
<feature type="binding site" evidence="3">
    <location>
        <position position="279"/>
    </location>
    <ligand>
        <name>CoA</name>
        <dbReference type="ChEBI" id="CHEBI:57287"/>
    </ligand>
</feature>
<feature type="binding site" evidence="3">
    <location>
        <position position="288"/>
    </location>
    <ligand>
        <name>CoA</name>
        <dbReference type="ChEBI" id="CHEBI:57287"/>
    </ligand>
</feature>
<feature type="binding site" evidence="3">
    <location>
        <position position="293"/>
    </location>
    <ligand>
        <name>CoA</name>
        <dbReference type="ChEBI" id="CHEBI:57287"/>
    </ligand>
</feature>
<feature type="binding site" evidence="3">
    <location>
        <position position="328"/>
    </location>
    <ligand>
        <name>CoA</name>
        <dbReference type="ChEBI" id="CHEBI:57287"/>
    </ligand>
</feature>
<feature type="binding site" evidence="3">
    <location>
        <position position="461"/>
    </location>
    <ligand>
        <name>CoA</name>
        <dbReference type="ChEBI" id="CHEBI:57287"/>
    </ligand>
</feature>
<feature type="modified residue" description="Phosphoserine" evidence="1">
    <location>
        <position position="380"/>
    </location>
</feature>
<feature type="modified residue" description="Phosphoserine" evidence="2">
    <location>
        <position position="685"/>
    </location>
</feature>
<feature type="modified residue" description="Phosphoserine" evidence="3">
    <location>
        <position position="692"/>
    </location>
</feature>
<feature type="modified residue" description="N6-acetyllysine" evidence="2">
    <location>
        <position position="777"/>
    </location>
</feature>
<feature type="modified residue" description="N6-acetyllysine" evidence="2">
    <location>
        <position position="781"/>
    </location>
</feature>
<sequence>MDESALTLGTIDVSYLPNSSEYSIGRCKHATEEWGECGSRPTVFRSATLKWKESLMSRKRPFVGRCCYSCTPQSWDKFFNPSIPSLGLRNVIYINETHTRHRGWLARRLSYVLFIQERDVHKGMFATNVTENVLNSSRVQEAIAEVAGELNPDGSAQQQSKAVNKVKKKARKILQEMVATVSPAMIRLTGWVLLKLFNSFFWNIQIHKGQLEMVKAATETNLPLIFLPVHRSHIDYLLLTFILFCHNIKAPYIASGNNLNIPIFSTLIHKLGGFFIRRRLDETPDGRKDILYRALLHGHIVELLRQQQFLEIFLEGTRSRSGKISCARAGLLSVVVDTLSTNTIPDILIIPGGISYDRIIEGHYNGEQLGKPKKNESLWSIARGVIRMLRKNYGCVKTDFAQPFSLKEYLESQSQKPVSAPLSLEQALLPAILPSRPSGAADEGTDMSINESRNATDESRRRLIAHLAEHILFTASKSCAIMSTHIVACLLLYRHRQGIGLFTLVEDFFVMKEEVLARDFDLGFSGNSEDVVMHAIQFLGNCITITHTSKNDEFFITPSTTIPSVFELNFYSNGVLHVFIMEAIIACSLYAVLKKRGPGGPASPSLVSQEQLVHKAASLCYLLSNEGTISLPCQTFYQICHETVGRFIQYGILIVAEQDDQEDISPGLAEQQWDKKLPEPLSWRSDEEDEDSDFGEEQRDCYLKVSQSKEHQQFITFLQRLLGPLLEAYSSAAVFIHNFGGPVPEPEFLQKLHKYLITRTERRVAVYAESATYCLVKNAVKTFKDIGVFKETKQKRVSGLELSNTFLPQCNRQKLLEYILSLVVL</sequence>
<gene>
    <name evidence="3" type="primary">GPAM</name>
    <name evidence="3" type="synonym">GPAT1</name>
</gene>
<organism>
    <name type="scientific">Bos taurus</name>
    <name type="common">Bovine</name>
    <dbReference type="NCBI Taxonomy" id="9913"/>
    <lineage>
        <taxon>Eukaryota</taxon>
        <taxon>Metazoa</taxon>
        <taxon>Chordata</taxon>
        <taxon>Craniata</taxon>
        <taxon>Vertebrata</taxon>
        <taxon>Euteleostomi</taxon>
        <taxon>Mammalia</taxon>
        <taxon>Eutheria</taxon>
        <taxon>Laurasiatheria</taxon>
        <taxon>Artiodactyla</taxon>
        <taxon>Ruminantia</taxon>
        <taxon>Pecora</taxon>
        <taxon>Bovidae</taxon>
        <taxon>Bovinae</taxon>
        <taxon>Bos</taxon>
    </lineage>
</organism>
<proteinExistence type="evidence at transcript level"/>
<protein>
    <recommendedName>
        <fullName evidence="3">Glycerol-3-phosphate acyltransferase 1, mitochondrial</fullName>
        <shortName evidence="3">GPAT-1</shortName>
        <ecNumber evidence="3">2.3.1.15</ecNumber>
    </recommendedName>
</protein>
<dbReference type="EC" id="2.3.1.15" evidence="3"/>
<dbReference type="EMBL" id="AY515690">
    <property type="protein sequence ID" value="AAS79429.1"/>
    <property type="molecule type" value="mRNA"/>
</dbReference>
<dbReference type="EMBL" id="AY945228">
    <property type="protein sequence ID" value="AAY24765.1"/>
    <property type="molecule type" value="Genomic_DNA"/>
</dbReference>
<dbReference type="EMBL" id="AY945226">
    <property type="protein sequence ID" value="AAY24765.1"/>
    <property type="status" value="JOINED"/>
    <property type="molecule type" value="Genomic_DNA"/>
</dbReference>
<dbReference type="EMBL" id="AY945227">
    <property type="protein sequence ID" value="AAY24765.1"/>
    <property type="status" value="JOINED"/>
    <property type="molecule type" value="Genomic_DNA"/>
</dbReference>
<dbReference type="RefSeq" id="NP_001012282.1">
    <property type="nucleotide sequence ID" value="NM_001012282.1"/>
</dbReference>
<dbReference type="SMR" id="Q5GJ77"/>
<dbReference type="FunCoup" id="Q5GJ77">
    <property type="interactions" value="843"/>
</dbReference>
<dbReference type="STRING" id="9913.ENSBTAP00000064796"/>
<dbReference type="PaxDb" id="9913-ENSBTAP00000015811"/>
<dbReference type="GeneID" id="497202"/>
<dbReference type="KEGG" id="bta:497202"/>
<dbReference type="CTD" id="57678"/>
<dbReference type="eggNOG" id="KOG3729">
    <property type="taxonomic scope" value="Eukaryota"/>
</dbReference>
<dbReference type="InParanoid" id="Q5GJ77"/>
<dbReference type="OrthoDB" id="5962536at2759"/>
<dbReference type="UniPathway" id="UPA00557">
    <property type="reaction ID" value="UER00612"/>
</dbReference>
<dbReference type="Proteomes" id="UP000009136">
    <property type="component" value="Unplaced"/>
</dbReference>
<dbReference type="GO" id="GO:0005741">
    <property type="term" value="C:mitochondrial outer membrane"/>
    <property type="evidence" value="ECO:0007669"/>
    <property type="project" value="UniProtKB-SubCell"/>
</dbReference>
<dbReference type="GO" id="GO:0005739">
    <property type="term" value="C:mitochondrion"/>
    <property type="evidence" value="ECO:0000318"/>
    <property type="project" value="GO_Central"/>
</dbReference>
<dbReference type="GO" id="GO:0005886">
    <property type="term" value="C:plasma membrane"/>
    <property type="evidence" value="ECO:0007669"/>
    <property type="project" value="InterPro"/>
</dbReference>
<dbReference type="GO" id="GO:0004366">
    <property type="term" value="F:glycerol-3-phosphate O-acyltransferase activity"/>
    <property type="evidence" value="ECO:0000250"/>
    <property type="project" value="UniProtKB"/>
</dbReference>
<dbReference type="GO" id="GO:0016024">
    <property type="term" value="P:CDP-diacylglycerol biosynthetic process"/>
    <property type="evidence" value="ECO:0007669"/>
    <property type="project" value="UniProtKB-UniPathway"/>
</dbReference>
<dbReference type="GO" id="GO:0006651">
    <property type="term" value="P:diacylglycerol biosynthetic process"/>
    <property type="evidence" value="ECO:0000250"/>
    <property type="project" value="UniProtKB"/>
</dbReference>
<dbReference type="GO" id="GO:0006650">
    <property type="term" value="P:glycerophospholipid metabolic process"/>
    <property type="evidence" value="ECO:0000318"/>
    <property type="project" value="GO_Central"/>
</dbReference>
<dbReference type="GO" id="GO:0006654">
    <property type="term" value="P:phosphatidic acid biosynthetic process"/>
    <property type="evidence" value="ECO:0000250"/>
    <property type="project" value="UniProtKB"/>
</dbReference>
<dbReference type="GO" id="GO:0006655">
    <property type="term" value="P:phosphatidylglycerol biosynthetic process"/>
    <property type="evidence" value="ECO:0000250"/>
    <property type="project" value="UniProtKB"/>
</dbReference>
<dbReference type="GO" id="GO:0019432">
    <property type="term" value="P:triglyceride biosynthetic process"/>
    <property type="evidence" value="ECO:0000318"/>
    <property type="project" value="GO_Central"/>
</dbReference>
<dbReference type="CDD" id="cd07993">
    <property type="entry name" value="LPLAT_DHAPAT-like"/>
    <property type="match status" value="1"/>
</dbReference>
<dbReference type="InterPro" id="IPR022284">
    <property type="entry name" value="GPAT/DHAPAT"/>
</dbReference>
<dbReference type="InterPro" id="IPR045520">
    <property type="entry name" value="GPAT/DHAPAT_C"/>
</dbReference>
<dbReference type="InterPro" id="IPR041728">
    <property type="entry name" value="GPAT/DHAPAT_LPLAT"/>
</dbReference>
<dbReference type="InterPro" id="IPR028354">
    <property type="entry name" value="GPAT_PlsB"/>
</dbReference>
<dbReference type="InterPro" id="IPR002123">
    <property type="entry name" value="Plipid/glycerol_acylTrfase"/>
</dbReference>
<dbReference type="PANTHER" id="PTHR12563">
    <property type="entry name" value="GLYCEROL-3-PHOSPHATE ACYLTRANSFERASE"/>
    <property type="match status" value="1"/>
</dbReference>
<dbReference type="PANTHER" id="PTHR12563:SF16">
    <property type="entry name" value="GLYCEROL-3-PHOSPHATE ACYLTRANSFERASE 1, MITOCHONDRIAL"/>
    <property type="match status" value="1"/>
</dbReference>
<dbReference type="Pfam" id="PF01553">
    <property type="entry name" value="Acyltransferase"/>
    <property type="match status" value="1"/>
</dbReference>
<dbReference type="Pfam" id="PF19277">
    <property type="entry name" value="GPAT_C"/>
    <property type="match status" value="1"/>
</dbReference>
<dbReference type="PIRSF" id="PIRSF500064">
    <property type="entry name" value="GPAT"/>
    <property type="match status" value="1"/>
</dbReference>
<dbReference type="PIRSF" id="PIRSF000437">
    <property type="entry name" value="GPAT_DHAPAT"/>
    <property type="match status" value="1"/>
</dbReference>
<dbReference type="SMART" id="SM00563">
    <property type="entry name" value="PlsC"/>
    <property type="match status" value="1"/>
</dbReference>
<dbReference type="SUPFAM" id="SSF69593">
    <property type="entry name" value="Glycerol-3-phosphate (1)-acyltransferase"/>
    <property type="match status" value="1"/>
</dbReference>
<reference key="1">
    <citation type="journal article" date="2006" name="Cytogenet. Genome Res.">
        <title>Genomic structure and an alternative transcript of bovine mitochondrial glycerol-3-phosphate acyltransferase gene (GPAM).</title>
        <authorList>
            <person name="Roy R."/>
            <person name="Ordovas L."/>
            <person name="Taourit S."/>
            <person name="Zaragoza P."/>
            <person name="Eggen A."/>
            <person name="Rodellar C."/>
        </authorList>
    </citation>
    <scope>NUCLEOTIDE SEQUENCE [GENOMIC DNA / MRNA]</scope>
    <scope>TISSUE SPECIFICITY</scope>
</reference>
<accession>Q5GJ77</accession>
<name>GPAT1_BOVIN</name>
<evidence type="ECO:0000250" key="1">
    <source>
        <dbReference type="UniProtKB" id="P97564"/>
    </source>
</evidence>
<evidence type="ECO:0000250" key="2">
    <source>
        <dbReference type="UniProtKB" id="Q61586"/>
    </source>
</evidence>
<evidence type="ECO:0000250" key="3">
    <source>
        <dbReference type="UniProtKB" id="Q9HCL2"/>
    </source>
</evidence>
<evidence type="ECO:0000256" key="4">
    <source>
        <dbReference type="SAM" id="MobiDB-lite"/>
    </source>
</evidence>
<evidence type="ECO:0000269" key="5">
    <source>
    </source>
</evidence>
<evidence type="ECO:0000305" key="6"/>
<keyword id="KW-0007">Acetylation</keyword>
<keyword id="KW-0012">Acyltransferase</keyword>
<keyword id="KW-0444">Lipid biosynthesis</keyword>
<keyword id="KW-0443">Lipid metabolism</keyword>
<keyword id="KW-0472">Membrane</keyword>
<keyword id="KW-0496">Mitochondrion</keyword>
<keyword id="KW-1000">Mitochondrion outer membrane</keyword>
<keyword id="KW-0594">Phospholipid biosynthesis</keyword>
<keyword id="KW-1208">Phospholipid metabolism</keyword>
<keyword id="KW-0597">Phosphoprotein</keyword>
<keyword id="KW-1185">Reference proteome</keyword>
<keyword id="KW-0808">Transferase</keyword>